<name>PSBK_LEPBU</name>
<comment type="function">
    <text evidence="1">One of the components of the core complex of photosystem II (PSII). PSII is a light-driven water:plastoquinone oxidoreductase that uses light energy to abstract electrons from H(2)O, generating O(2) and a proton gradient subsequently used for ATP formation. It consists of a core antenna complex that captures photons, and an electron transfer chain that converts photonic excitation into a charge separation.</text>
</comment>
<comment type="subunit">
    <text evidence="1">PSII is composed of 1 copy each of membrane proteins PsbA, PsbB, PsbC, PsbD, PsbE, PsbF, PsbH, PsbI, PsbJ, PsbK, PsbL, PsbM, PsbT, PsbX, PsbY, PsbZ, Psb30/Ycf12, at least 3 peripheral proteins of the oxygen-evolving complex and a large number of cofactors. It forms dimeric complexes.</text>
</comment>
<comment type="subcellular location">
    <subcellularLocation>
        <location evidence="1">Plastid</location>
        <location evidence="1">Chloroplast thylakoid membrane</location>
        <topology evidence="1">Single-pass membrane protein</topology>
    </subcellularLocation>
</comment>
<comment type="similarity">
    <text evidence="1">Belongs to the PsbK family.</text>
</comment>
<dbReference type="EMBL" id="AF241278">
    <property type="protein sequence ID" value="AAF82444.1"/>
    <property type="molecule type" value="Genomic_DNA"/>
</dbReference>
<dbReference type="SMR" id="Q9MS73"/>
<dbReference type="GO" id="GO:0009535">
    <property type="term" value="C:chloroplast thylakoid membrane"/>
    <property type="evidence" value="ECO:0007669"/>
    <property type="project" value="UniProtKB-SubCell"/>
</dbReference>
<dbReference type="GO" id="GO:0009539">
    <property type="term" value="C:photosystem II reaction center"/>
    <property type="evidence" value="ECO:0007669"/>
    <property type="project" value="InterPro"/>
</dbReference>
<dbReference type="GO" id="GO:0015979">
    <property type="term" value="P:photosynthesis"/>
    <property type="evidence" value="ECO:0007669"/>
    <property type="project" value="UniProtKB-UniRule"/>
</dbReference>
<dbReference type="HAMAP" id="MF_00441">
    <property type="entry name" value="PSII_PsbK"/>
    <property type="match status" value="1"/>
</dbReference>
<dbReference type="InterPro" id="IPR003687">
    <property type="entry name" value="PSII_PsbK"/>
</dbReference>
<dbReference type="InterPro" id="IPR037270">
    <property type="entry name" value="PSII_PsbK_sf"/>
</dbReference>
<dbReference type="NCBIfam" id="NF002715">
    <property type="entry name" value="PRK02553.1"/>
    <property type="match status" value="1"/>
</dbReference>
<dbReference type="PANTHER" id="PTHR35325">
    <property type="match status" value="1"/>
</dbReference>
<dbReference type="PANTHER" id="PTHR35325:SF1">
    <property type="entry name" value="PHOTOSYSTEM II REACTION CENTER PROTEIN K"/>
    <property type="match status" value="1"/>
</dbReference>
<dbReference type="Pfam" id="PF02533">
    <property type="entry name" value="PsbK"/>
    <property type="match status" value="1"/>
</dbReference>
<dbReference type="SUPFAM" id="SSF161037">
    <property type="entry name" value="Photosystem II reaction center protein K, PsbK"/>
    <property type="match status" value="1"/>
</dbReference>
<organism>
    <name type="scientific">Lepocinclis buetschlii</name>
    <dbReference type="NCBI Taxonomy" id="66847"/>
    <lineage>
        <taxon>Eukaryota</taxon>
        <taxon>Discoba</taxon>
        <taxon>Euglenozoa</taxon>
        <taxon>Euglenida</taxon>
        <taxon>Spirocuta</taxon>
        <taxon>Euglenophyceae</taxon>
        <taxon>Euglenales</taxon>
        <taxon>Phacaceae</taxon>
        <taxon>Lepocinclis</taxon>
    </lineage>
</organism>
<feature type="propeptide" id="PRO_0000432466" evidence="1">
    <location>
        <begin position="1"/>
        <end position="11"/>
    </location>
</feature>
<feature type="chain" id="PRO_0000029482" description="Photosystem II reaction center protein K" evidence="1">
    <location>
        <begin position="12"/>
        <end position="48"/>
    </location>
</feature>
<feature type="transmembrane region" description="Helical" evidence="1">
    <location>
        <begin position="23"/>
        <end position="43"/>
    </location>
</feature>
<accession>Q9MS73</accession>
<proteinExistence type="inferred from homology"/>
<sequence length="48" mass="5533">MFLFNLEQSIGLLPEAYLPFDPLVDVLPIIPLLFLLLAFVWQAAVKFR</sequence>
<protein>
    <recommendedName>
        <fullName evidence="1">Photosystem II reaction center protein K</fullName>
        <shortName evidence="1">PSII-K</shortName>
    </recommendedName>
</protein>
<geneLocation type="chloroplast"/>
<evidence type="ECO:0000255" key="1">
    <source>
        <dbReference type="HAMAP-Rule" id="MF_00441"/>
    </source>
</evidence>
<reference key="1">
    <citation type="journal article" date="2001" name="Mol. Gen. Genet.">
        <title>Comparison of psbK operon organization and group III intron content in chloroplast genomes of 12 Euglenoid species.</title>
        <authorList>
            <person name="Doetsch N.A."/>
            <person name="Thompson M.D."/>
            <person name="Favreau M.R."/>
            <person name="Hallick R.B."/>
        </authorList>
    </citation>
    <scope>NUCLEOTIDE SEQUENCE [GENOMIC DNA]</scope>
</reference>
<gene>
    <name evidence="1" type="primary">psbK</name>
</gene>
<keyword id="KW-0150">Chloroplast</keyword>
<keyword id="KW-0472">Membrane</keyword>
<keyword id="KW-0602">Photosynthesis</keyword>
<keyword id="KW-0604">Photosystem II</keyword>
<keyword id="KW-0934">Plastid</keyword>
<keyword id="KW-0674">Reaction center</keyword>
<keyword id="KW-0793">Thylakoid</keyword>
<keyword id="KW-0812">Transmembrane</keyword>
<keyword id="KW-1133">Transmembrane helix</keyword>